<dbReference type="EMBL" id="X59720">
    <property type="protein sequence ID" value="CAA42257.1"/>
    <property type="molecule type" value="Genomic_DNA"/>
</dbReference>
<dbReference type="EMBL" id="BK006937">
    <property type="protein sequence ID" value="DAA07552.1"/>
    <property type="molecule type" value="Genomic_DNA"/>
</dbReference>
<dbReference type="PIR" id="S19497">
    <property type="entry name" value="S19497"/>
</dbReference>
<dbReference type="RefSeq" id="NP_010005.1">
    <property type="nucleotide sequence ID" value="NM_001178788.1"/>
</dbReference>
<dbReference type="SMR" id="P25649"/>
<dbReference type="BioGRID" id="31055">
    <property type="interactions" value="91"/>
</dbReference>
<dbReference type="ComplexPortal" id="CPX-608">
    <property type="entry name" value="ADA complex"/>
</dbReference>
<dbReference type="DIP" id="DIP-1183N"/>
<dbReference type="FunCoup" id="P25649">
    <property type="interactions" value="274"/>
</dbReference>
<dbReference type="IntAct" id="P25649">
    <property type="interactions" value="24"/>
</dbReference>
<dbReference type="MINT" id="P25649"/>
<dbReference type="STRING" id="4932.YCR082W"/>
<dbReference type="PaxDb" id="4932-YCR082W"/>
<dbReference type="PeptideAtlas" id="P25649"/>
<dbReference type="DNASU" id="850443"/>
<dbReference type="EnsemblFungi" id="YCR082W_mRNA">
    <property type="protein sequence ID" value="YCR082W"/>
    <property type="gene ID" value="YCR082W"/>
</dbReference>
<dbReference type="GeneID" id="850443"/>
<dbReference type="KEGG" id="sce:YCR082W"/>
<dbReference type="AGR" id="SGD:S000000678"/>
<dbReference type="SGD" id="S000000678">
    <property type="gene designation" value="AHC2"/>
</dbReference>
<dbReference type="VEuPathDB" id="FungiDB:YCR082W"/>
<dbReference type="eggNOG" id="ENOG502S8R2">
    <property type="taxonomic scope" value="Eukaryota"/>
</dbReference>
<dbReference type="HOGENOM" id="CLU_152070_0_0_1"/>
<dbReference type="InParanoid" id="P25649"/>
<dbReference type="OMA" id="DKTRNYQ"/>
<dbReference type="OrthoDB" id="4067598at2759"/>
<dbReference type="BioCyc" id="YEAST:G3O-29378-MONOMER"/>
<dbReference type="BioGRID-ORCS" id="850443">
    <property type="hits" value="0 hits in 10 CRISPR screens"/>
</dbReference>
<dbReference type="PRO" id="PR:P25649"/>
<dbReference type="Proteomes" id="UP000002311">
    <property type="component" value="Chromosome III"/>
</dbReference>
<dbReference type="RNAct" id="P25649">
    <property type="molecule type" value="protein"/>
</dbReference>
<dbReference type="GO" id="GO:0140671">
    <property type="term" value="C:ADA complex"/>
    <property type="evidence" value="ECO:0000315"/>
    <property type="project" value="SGD"/>
</dbReference>
<dbReference type="GO" id="GO:0005737">
    <property type="term" value="C:cytoplasm"/>
    <property type="evidence" value="ECO:0007005"/>
    <property type="project" value="SGD"/>
</dbReference>
<dbReference type="GO" id="GO:0005634">
    <property type="term" value="C:nucleus"/>
    <property type="evidence" value="ECO:0007005"/>
    <property type="project" value="SGD"/>
</dbReference>
<dbReference type="GO" id="GO:0045944">
    <property type="term" value="P:positive regulation of transcription by RNA polymerase II"/>
    <property type="evidence" value="ECO:0000314"/>
    <property type="project" value="SGD"/>
</dbReference>
<dbReference type="GO" id="GO:0006357">
    <property type="term" value="P:regulation of transcription by RNA polymerase II"/>
    <property type="evidence" value="ECO:0000303"/>
    <property type="project" value="ComplexPortal"/>
</dbReference>
<reference key="1">
    <citation type="journal article" date="1992" name="Nature">
        <title>The complete DNA sequence of yeast chromosome III.</title>
        <authorList>
            <person name="Oliver S.G."/>
            <person name="van der Aart Q.J.M."/>
            <person name="Agostoni-Carbone M.L."/>
            <person name="Aigle M."/>
            <person name="Alberghina L."/>
            <person name="Alexandraki D."/>
            <person name="Antoine G."/>
            <person name="Anwar R."/>
            <person name="Ballesta J.P.G."/>
            <person name="Benit P."/>
            <person name="Berben G."/>
            <person name="Bergantino E."/>
            <person name="Biteau N."/>
            <person name="Bolle P.-A."/>
            <person name="Bolotin-Fukuhara M."/>
            <person name="Brown A."/>
            <person name="Brown A.J.P."/>
            <person name="Buhler J.-M."/>
            <person name="Carcano C."/>
            <person name="Carignani G."/>
            <person name="Cederberg H."/>
            <person name="Chanet R."/>
            <person name="Contreras R."/>
            <person name="Crouzet M."/>
            <person name="Daignan-Fornier B."/>
            <person name="Defoor E."/>
            <person name="Delgado M.D."/>
            <person name="Demolder J."/>
            <person name="Doira C."/>
            <person name="Dubois E."/>
            <person name="Dujon B."/>
            <person name="Duesterhoeft A."/>
            <person name="Erdmann D."/>
            <person name="Esteban M."/>
            <person name="Fabre F."/>
            <person name="Fairhead C."/>
            <person name="Faye G."/>
            <person name="Feldmann H."/>
            <person name="Fiers W."/>
            <person name="Francingues-Gaillard M.-C."/>
            <person name="Franco L."/>
            <person name="Frontali L."/>
            <person name="Fukuhara H."/>
            <person name="Fuller L.J."/>
            <person name="Galland P."/>
            <person name="Gent M.E."/>
            <person name="Gigot D."/>
            <person name="Gilliquet V."/>
            <person name="Glansdorff N."/>
            <person name="Goffeau A."/>
            <person name="Grenson M."/>
            <person name="Grisanti P."/>
            <person name="Grivell L.A."/>
            <person name="de Haan M."/>
            <person name="Haasemann M."/>
            <person name="Hatat D."/>
            <person name="Hoenicka J."/>
            <person name="Hegemann J.H."/>
            <person name="Herbert C.J."/>
            <person name="Hilger F."/>
            <person name="Hohmann S."/>
            <person name="Hollenberg C.P."/>
            <person name="Huse K."/>
            <person name="Iborra F."/>
            <person name="Indge K.J."/>
            <person name="Isono K."/>
            <person name="Jacq C."/>
            <person name="Jacquet M."/>
            <person name="James C.M."/>
            <person name="Jauniaux J.-C."/>
            <person name="Jia Y."/>
            <person name="Jimenez A."/>
            <person name="Kelly A."/>
            <person name="Kleinhans U."/>
            <person name="Kreisl P."/>
            <person name="Lanfranchi G."/>
            <person name="Lewis C."/>
            <person name="van der Linden C.G."/>
            <person name="Lucchini G."/>
            <person name="Lutzenkirchen K."/>
            <person name="Maat M.J."/>
            <person name="Mallet L."/>
            <person name="Mannhaupt G."/>
            <person name="Martegani E."/>
            <person name="Mathieu A."/>
            <person name="Maurer C.T.C."/>
            <person name="McConnell D."/>
            <person name="McKee R.A."/>
            <person name="Messenguy F."/>
            <person name="Mewes H.-W."/>
            <person name="Molemans F."/>
            <person name="Montague M.A."/>
            <person name="Muzi Falconi M."/>
            <person name="Navas L."/>
            <person name="Newlon C.S."/>
            <person name="Noone D."/>
            <person name="Pallier C."/>
            <person name="Panzeri L."/>
            <person name="Pearson B.M."/>
            <person name="Perea J."/>
            <person name="Philippsen P."/>
            <person name="Pierard A."/>
            <person name="Planta R.J."/>
            <person name="Plevani P."/>
            <person name="Poetsch B."/>
            <person name="Pohl F.M."/>
            <person name="Purnelle B."/>
            <person name="Ramezani Rad M."/>
            <person name="Rasmussen S.W."/>
            <person name="Raynal A."/>
            <person name="Remacha M.A."/>
            <person name="Richterich P."/>
            <person name="Roberts A.B."/>
            <person name="Rodriguez F."/>
            <person name="Sanz E."/>
            <person name="Schaaff-Gerstenschlaeger I."/>
            <person name="Scherens B."/>
            <person name="Schweitzer B."/>
            <person name="Shu Y."/>
            <person name="Skala J."/>
            <person name="Slonimski P.P."/>
            <person name="Sor F."/>
            <person name="Soustelle C."/>
            <person name="Spiegelberg R."/>
            <person name="Stateva L.I."/>
            <person name="Steensma H.Y."/>
            <person name="Steiner S."/>
            <person name="Thierry A."/>
            <person name="Thireos G."/>
            <person name="Tzermia M."/>
            <person name="Urrestarazu L.A."/>
            <person name="Valle G."/>
            <person name="Vetter I."/>
            <person name="van Vliet-Reedijk J.C."/>
            <person name="Voet M."/>
            <person name="Volckaert G."/>
            <person name="Vreken P."/>
            <person name="Wang H."/>
            <person name="Warmington J.R."/>
            <person name="von Wettstein D."/>
            <person name="Wicksteed B.L."/>
            <person name="Wilson C."/>
            <person name="Wurst H."/>
            <person name="Xu G."/>
            <person name="Yoshikawa A."/>
            <person name="Zimmermann F.K."/>
            <person name="Sgouros J.G."/>
        </authorList>
    </citation>
    <scope>NUCLEOTIDE SEQUENCE [LARGE SCALE GENOMIC DNA]</scope>
    <source>
        <strain>ATCC 204508 / S288c</strain>
    </source>
</reference>
<reference key="2">
    <citation type="journal article" date="2014" name="G3 (Bethesda)">
        <title>The reference genome sequence of Saccharomyces cerevisiae: Then and now.</title>
        <authorList>
            <person name="Engel S.R."/>
            <person name="Dietrich F.S."/>
            <person name="Fisk D.G."/>
            <person name="Binkley G."/>
            <person name="Balakrishnan R."/>
            <person name="Costanzo M.C."/>
            <person name="Dwight S.S."/>
            <person name="Hitz B.C."/>
            <person name="Karra K."/>
            <person name="Nash R.S."/>
            <person name="Weng S."/>
            <person name="Wong E.D."/>
            <person name="Lloyd P."/>
            <person name="Skrzypek M.S."/>
            <person name="Miyasato S.R."/>
            <person name="Simison M."/>
            <person name="Cherry J.M."/>
        </authorList>
    </citation>
    <scope>GENOME REANNOTATION</scope>
    <source>
        <strain>ATCC 204508 / S288c</strain>
    </source>
</reference>
<reference key="3">
    <citation type="journal article" date="2003" name="Nature">
        <title>Global analysis of protein localization in budding yeast.</title>
        <authorList>
            <person name="Huh W.-K."/>
            <person name="Falvo J.V."/>
            <person name="Gerke L.C."/>
            <person name="Carroll A.S."/>
            <person name="Howson R.W."/>
            <person name="Weissman J.S."/>
            <person name="O'Shea E.K."/>
        </authorList>
    </citation>
    <scope>SUBCELLULAR LOCATION [LARGE SCALE ANALYSIS]</scope>
</reference>
<reference key="4">
    <citation type="journal article" date="2003" name="Nature">
        <title>Global analysis of protein expression in yeast.</title>
        <authorList>
            <person name="Ghaemmaghami S."/>
            <person name="Huh W.-K."/>
            <person name="Bower K."/>
            <person name="Howson R.W."/>
            <person name="Belle A."/>
            <person name="Dephoure N."/>
            <person name="O'Shea E.K."/>
            <person name="Weissman J.S."/>
        </authorList>
    </citation>
    <scope>LEVEL OF PROTEIN EXPRESSION [LARGE SCALE ANALYSIS]</scope>
</reference>
<name>AHC2_YEAST</name>
<keyword id="KW-0963">Cytoplasm</keyword>
<keyword id="KW-0539">Nucleus</keyword>
<keyword id="KW-1185">Reference proteome</keyword>
<accession>P25649</accession>
<accession>D6VR83</accession>
<feature type="chain" id="PRO_0000202575" description="ADA histone acetyltransferase complex component 2">
    <location>
        <begin position="1"/>
        <end position="128"/>
    </location>
</feature>
<evidence type="ECO:0000269" key="1">
    <source>
    </source>
</evidence>
<evidence type="ECO:0000269" key="2">
    <source>
    </source>
</evidence>
<gene>
    <name type="primary">AHC2</name>
    <name type="ordered locus">YCR082W</name>
    <name type="ORF">YCR82W</name>
</gene>
<protein>
    <recommendedName>
        <fullName>ADA histone acetyltransferase complex component 2</fullName>
    </recommendedName>
    <alternativeName>
        <fullName>Putative transcriptional regulator AHC2</fullName>
    </alternativeName>
</protein>
<comment type="interaction">
    <interactant intactId="EBI-21993">
        <id>P25649</id>
    </interactant>
    <interactant intactId="EBI-33947">
        <id>Q12433</id>
        <label>AHC1</label>
    </interactant>
    <organismsDiffer>false</organismsDiffer>
    <experiments>6</experiments>
</comment>
<comment type="subcellular location">
    <subcellularLocation>
        <location evidence="1">Cytoplasm</location>
    </subcellularLocation>
    <subcellularLocation>
        <location evidence="1">Nucleus</location>
    </subcellularLocation>
</comment>
<comment type="miscellaneous">
    <text evidence="2">Present with 981 molecules/cell in log phase SD medium.</text>
</comment>
<proteinExistence type="evidence at protein level"/>
<sequence>MITPKGTHDAVAKFQKTDLHQDLDYIVLQQRRTQLETLINERESFVKNLCSLFHKIQNTKNYQEFVDVLAENRDLLREIFTVENGFQKQKWISNDDIPQIDWDKFALDINAYIAENDQLLALYEDGLL</sequence>
<organism>
    <name type="scientific">Saccharomyces cerevisiae (strain ATCC 204508 / S288c)</name>
    <name type="common">Baker's yeast</name>
    <dbReference type="NCBI Taxonomy" id="559292"/>
    <lineage>
        <taxon>Eukaryota</taxon>
        <taxon>Fungi</taxon>
        <taxon>Dikarya</taxon>
        <taxon>Ascomycota</taxon>
        <taxon>Saccharomycotina</taxon>
        <taxon>Saccharomycetes</taxon>
        <taxon>Saccharomycetales</taxon>
        <taxon>Saccharomycetaceae</taxon>
        <taxon>Saccharomyces</taxon>
    </lineage>
</organism>